<reference key="1">
    <citation type="submission" date="2003-11" db="EMBL/GenBank/DDBJ databases">
        <authorList>
            <person name="Li L.-Y."/>
            <person name="Mo Y.-Q."/>
            <person name="Lu G.-X."/>
        </authorList>
    </citation>
    <scope>NUCLEOTIDE SEQUENCE [MRNA]</scope>
</reference>
<reference key="2">
    <citation type="journal article" date="2004" name="Nat. Genet.">
        <title>Complete sequencing and characterization of 21,243 full-length human cDNAs.</title>
        <authorList>
            <person name="Ota T."/>
            <person name="Suzuki Y."/>
            <person name="Nishikawa T."/>
            <person name="Otsuki T."/>
            <person name="Sugiyama T."/>
            <person name="Irie R."/>
            <person name="Wakamatsu A."/>
            <person name="Hayashi K."/>
            <person name="Sato H."/>
            <person name="Nagai K."/>
            <person name="Kimura K."/>
            <person name="Makita H."/>
            <person name="Sekine M."/>
            <person name="Obayashi M."/>
            <person name="Nishi T."/>
            <person name="Shibahara T."/>
            <person name="Tanaka T."/>
            <person name="Ishii S."/>
            <person name="Yamamoto J."/>
            <person name="Saito K."/>
            <person name="Kawai Y."/>
            <person name="Isono Y."/>
            <person name="Nakamura Y."/>
            <person name="Nagahari K."/>
            <person name="Murakami K."/>
            <person name="Yasuda T."/>
            <person name="Iwayanagi T."/>
            <person name="Wagatsuma M."/>
            <person name="Shiratori A."/>
            <person name="Sudo H."/>
            <person name="Hosoiri T."/>
            <person name="Kaku Y."/>
            <person name="Kodaira H."/>
            <person name="Kondo H."/>
            <person name="Sugawara M."/>
            <person name="Takahashi M."/>
            <person name="Kanda K."/>
            <person name="Yokoi T."/>
            <person name="Furuya T."/>
            <person name="Kikkawa E."/>
            <person name="Omura Y."/>
            <person name="Abe K."/>
            <person name="Kamihara K."/>
            <person name="Katsuta N."/>
            <person name="Sato K."/>
            <person name="Tanikawa M."/>
            <person name="Yamazaki M."/>
            <person name="Ninomiya K."/>
            <person name="Ishibashi T."/>
            <person name="Yamashita H."/>
            <person name="Murakawa K."/>
            <person name="Fujimori K."/>
            <person name="Tanai H."/>
            <person name="Kimata M."/>
            <person name="Watanabe M."/>
            <person name="Hiraoka S."/>
            <person name="Chiba Y."/>
            <person name="Ishida S."/>
            <person name="Ono Y."/>
            <person name="Takiguchi S."/>
            <person name="Watanabe S."/>
            <person name="Yosida M."/>
            <person name="Hotuta T."/>
            <person name="Kusano J."/>
            <person name="Kanehori K."/>
            <person name="Takahashi-Fujii A."/>
            <person name="Hara H."/>
            <person name="Tanase T.-O."/>
            <person name="Nomura Y."/>
            <person name="Togiya S."/>
            <person name="Komai F."/>
            <person name="Hara R."/>
            <person name="Takeuchi K."/>
            <person name="Arita M."/>
            <person name="Imose N."/>
            <person name="Musashino K."/>
            <person name="Yuuki H."/>
            <person name="Oshima A."/>
            <person name="Sasaki N."/>
            <person name="Aotsuka S."/>
            <person name="Yoshikawa Y."/>
            <person name="Matsunawa H."/>
            <person name="Ichihara T."/>
            <person name="Shiohata N."/>
            <person name="Sano S."/>
            <person name="Moriya S."/>
            <person name="Momiyama H."/>
            <person name="Satoh N."/>
            <person name="Takami S."/>
            <person name="Terashima Y."/>
            <person name="Suzuki O."/>
            <person name="Nakagawa S."/>
            <person name="Senoh A."/>
            <person name="Mizoguchi H."/>
            <person name="Goto Y."/>
            <person name="Shimizu F."/>
            <person name="Wakebe H."/>
            <person name="Hishigaki H."/>
            <person name="Watanabe T."/>
            <person name="Sugiyama A."/>
            <person name="Takemoto M."/>
            <person name="Kawakami B."/>
            <person name="Yamazaki M."/>
            <person name="Watanabe K."/>
            <person name="Kumagai A."/>
            <person name="Itakura S."/>
            <person name="Fukuzumi Y."/>
            <person name="Fujimori Y."/>
            <person name="Komiyama M."/>
            <person name="Tashiro H."/>
            <person name="Tanigami A."/>
            <person name="Fujiwara T."/>
            <person name="Ono T."/>
            <person name="Yamada K."/>
            <person name="Fujii Y."/>
            <person name="Ozaki K."/>
            <person name="Hirao M."/>
            <person name="Ohmori Y."/>
            <person name="Kawabata A."/>
            <person name="Hikiji T."/>
            <person name="Kobatake N."/>
            <person name="Inagaki H."/>
            <person name="Ikema Y."/>
            <person name="Okamoto S."/>
            <person name="Okitani R."/>
            <person name="Kawakami T."/>
            <person name="Noguchi S."/>
            <person name="Itoh T."/>
            <person name="Shigeta K."/>
            <person name="Senba T."/>
            <person name="Matsumura K."/>
            <person name="Nakajima Y."/>
            <person name="Mizuno T."/>
            <person name="Morinaga M."/>
            <person name="Sasaki M."/>
            <person name="Togashi T."/>
            <person name="Oyama M."/>
            <person name="Hata H."/>
            <person name="Watanabe M."/>
            <person name="Komatsu T."/>
            <person name="Mizushima-Sugano J."/>
            <person name="Satoh T."/>
            <person name="Shirai Y."/>
            <person name="Takahashi Y."/>
            <person name="Nakagawa K."/>
            <person name="Okumura K."/>
            <person name="Nagase T."/>
            <person name="Nomura N."/>
            <person name="Kikuchi H."/>
            <person name="Masuho Y."/>
            <person name="Yamashita R."/>
            <person name="Nakai K."/>
            <person name="Yada T."/>
            <person name="Nakamura Y."/>
            <person name="Ohara O."/>
            <person name="Isogai T."/>
            <person name="Sugano S."/>
        </authorList>
    </citation>
    <scope>NUCLEOTIDE SEQUENCE [LARGE SCALE MRNA]</scope>
    <source>
        <tissue>Testis</tissue>
    </source>
</reference>
<reference key="3">
    <citation type="submission" date="2005-09" db="EMBL/GenBank/DDBJ databases">
        <authorList>
            <person name="Mural R.J."/>
            <person name="Istrail S."/>
            <person name="Sutton G.G."/>
            <person name="Florea L."/>
            <person name="Halpern A.L."/>
            <person name="Mobarry C.M."/>
            <person name="Lippert R."/>
            <person name="Walenz B."/>
            <person name="Shatkay H."/>
            <person name="Dew I."/>
            <person name="Miller J.R."/>
            <person name="Flanigan M.J."/>
            <person name="Edwards N.J."/>
            <person name="Bolanos R."/>
            <person name="Fasulo D."/>
            <person name="Halldorsson B.V."/>
            <person name="Hannenhalli S."/>
            <person name="Turner R."/>
            <person name="Yooseph S."/>
            <person name="Lu F."/>
            <person name="Nusskern D.R."/>
            <person name="Shue B.C."/>
            <person name="Zheng X.H."/>
            <person name="Zhong F."/>
            <person name="Delcher A.L."/>
            <person name="Huson D.H."/>
            <person name="Kravitz S.A."/>
            <person name="Mouchard L."/>
            <person name="Reinert K."/>
            <person name="Remington K.A."/>
            <person name="Clark A.G."/>
            <person name="Waterman M.S."/>
            <person name="Eichler E.E."/>
            <person name="Adams M.D."/>
            <person name="Hunkapiller M.W."/>
            <person name="Myers E.W."/>
            <person name="Venter J.C."/>
        </authorList>
    </citation>
    <scope>NUCLEOTIDE SEQUENCE [LARGE SCALE GENOMIC DNA]</scope>
</reference>
<reference key="4">
    <citation type="journal article" date="2004" name="Genome Res.">
        <title>The status, quality, and expansion of the NIH full-length cDNA project: the Mammalian Gene Collection (MGC).</title>
        <authorList>
            <consortium name="The MGC Project Team"/>
        </authorList>
    </citation>
    <scope>NUCLEOTIDE SEQUENCE [LARGE SCALE MRNA]</scope>
    <source>
        <tissue>Brain</tissue>
    </source>
</reference>
<organism>
    <name type="scientific">Homo sapiens</name>
    <name type="common">Human</name>
    <dbReference type="NCBI Taxonomy" id="9606"/>
    <lineage>
        <taxon>Eukaryota</taxon>
        <taxon>Metazoa</taxon>
        <taxon>Chordata</taxon>
        <taxon>Craniata</taxon>
        <taxon>Vertebrata</taxon>
        <taxon>Euteleostomi</taxon>
        <taxon>Mammalia</taxon>
        <taxon>Eutheria</taxon>
        <taxon>Euarchontoglires</taxon>
        <taxon>Primates</taxon>
        <taxon>Haplorrhini</taxon>
        <taxon>Catarrhini</taxon>
        <taxon>Hominidae</taxon>
        <taxon>Homo</taxon>
    </lineage>
</organism>
<accession>Q6S9Z5</accession>
<accession>A8K4M0</accession>
<accession>Q96M07</accession>
<keyword id="KW-0479">Metal-binding</keyword>
<keyword id="KW-1267">Proteomics identification</keyword>
<keyword id="KW-1185">Reference proteome</keyword>
<keyword id="KW-0677">Repeat</keyword>
<keyword id="KW-0862">Zinc</keyword>
<keyword id="KW-0863">Zinc-finger</keyword>
<evidence type="ECO:0000255" key="1">
    <source>
        <dbReference type="PROSITE-ProRule" id="PRU01371"/>
    </source>
</evidence>
<evidence type="ECO:0000256" key="2">
    <source>
        <dbReference type="SAM" id="MobiDB-lite"/>
    </source>
</evidence>
<evidence type="ECO:0000305" key="3"/>
<sequence>MERGKKKRISNKLQQTFHHSKEPTFLINQAGLLSSDSYSSLSPETESVNPGENIKTDTQKKRPGTVILSKLSSRRIISESQLSPPVIPARRPGFRVCYICGREFGSQSIAIHEPQCLQKWHIENSKLPKHLRRPEPSKPQSLSSSGSYSLQATNEAAFQSAQAQLLPCESCGRTFLPDHLLVHHRSCKPKGEGPRAPHSNSSDHLTGLKKACSGTPARPRTVICYICGKEFGTLSLPIHEPKCLEKWKMENDRLPVELHQPLPQKPQPLPNAQSSQAGPNQAQLVFCPHCSRIFTSDRLLVHQRSCKTHPYGPKYQNLNLGSKGGLKEYTNSKQQRNRAAPSVTDKVIHATQDALGEPGGALCL</sequence>
<feature type="chain" id="PRO_0000280414" description="Zinc finger protein 474">
    <location>
        <begin position="1"/>
        <end position="364"/>
    </location>
</feature>
<feature type="zinc finger region" description="C2HC/C3H-type 1" evidence="1">
    <location>
        <begin position="93"/>
        <end position="122"/>
    </location>
</feature>
<feature type="zinc finger region" description="C2HC/C3H-type 2" evidence="1">
    <location>
        <begin position="164"/>
        <end position="193"/>
    </location>
</feature>
<feature type="zinc finger region" description="C2HC/C3H-type 3" evidence="1">
    <location>
        <begin position="220"/>
        <end position="249"/>
    </location>
</feature>
<feature type="zinc finger region" description="C2HC/C3H-type 4" evidence="1">
    <location>
        <begin position="283"/>
        <end position="312"/>
    </location>
</feature>
<feature type="region of interest" description="Disordered" evidence="2">
    <location>
        <begin position="1"/>
        <end position="21"/>
    </location>
</feature>
<feature type="region of interest" description="Disordered" evidence="2">
    <location>
        <begin position="37"/>
        <end position="60"/>
    </location>
</feature>
<feature type="region of interest" description="Disordered" evidence="2">
    <location>
        <begin position="127"/>
        <end position="147"/>
    </location>
</feature>
<feature type="region of interest" description="Disordered" evidence="2">
    <location>
        <begin position="187"/>
        <end position="214"/>
    </location>
</feature>
<feature type="compositionally biased region" description="Basic residues" evidence="2">
    <location>
        <begin position="1"/>
        <end position="10"/>
    </location>
</feature>
<feature type="compositionally biased region" description="Low complexity" evidence="2">
    <location>
        <begin position="138"/>
        <end position="147"/>
    </location>
</feature>
<feature type="binding site" evidence="1">
    <location>
        <position position="97"/>
    </location>
    <ligand>
        <name>Zn(2+)</name>
        <dbReference type="ChEBI" id="CHEBI:29105"/>
        <label>1</label>
    </ligand>
</feature>
<feature type="binding site" evidence="1">
    <location>
        <position position="100"/>
    </location>
    <ligand>
        <name>Zn(2+)</name>
        <dbReference type="ChEBI" id="CHEBI:29105"/>
        <label>1</label>
    </ligand>
</feature>
<feature type="binding site" evidence="1">
    <location>
        <position position="112"/>
    </location>
    <ligand>
        <name>Zn(2+)</name>
        <dbReference type="ChEBI" id="CHEBI:29105"/>
        <label>1</label>
    </ligand>
</feature>
<feature type="binding site" evidence="1">
    <location>
        <position position="116"/>
    </location>
    <ligand>
        <name>Zn(2+)</name>
        <dbReference type="ChEBI" id="CHEBI:29105"/>
        <label>1</label>
    </ligand>
</feature>
<feature type="binding site" evidence="1">
    <location>
        <position position="168"/>
    </location>
    <ligand>
        <name>Zn(2+)</name>
        <dbReference type="ChEBI" id="CHEBI:29105"/>
        <label>2</label>
    </ligand>
</feature>
<feature type="binding site" evidence="1">
    <location>
        <position position="171"/>
    </location>
    <ligand>
        <name>Zn(2+)</name>
        <dbReference type="ChEBI" id="CHEBI:29105"/>
        <label>2</label>
    </ligand>
</feature>
<feature type="binding site" evidence="1">
    <location>
        <position position="183"/>
    </location>
    <ligand>
        <name>Zn(2+)</name>
        <dbReference type="ChEBI" id="CHEBI:29105"/>
        <label>2</label>
    </ligand>
</feature>
<feature type="binding site" evidence="1">
    <location>
        <position position="187"/>
    </location>
    <ligand>
        <name>Zn(2+)</name>
        <dbReference type="ChEBI" id="CHEBI:29105"/>
        <label>2</label>
    </ligand>
</feature>
<feature type="binding site" evidence="1">
    <location>
        <position position="224"/>
    </location>
    <ligand>
        <name>Zn(2+)</name>
        <dbReference type="ChEBI" id="CHEBI:29105"/>
        <label>3</label>
    </ligand>
</feature>
<feature type="binding site" evidence="1">
    <location>
        <position position="227"/>
    </location>
    <ligand>
        <name>Zn(2+)</name>
        <dbReference type="ChEBI" id="CHEBI:29105"/>
        <label>3</label>
    </ligand>
</feature>
<feature type="binding site" evidence="1">
    <location>
        <position position="239"/>
    </location>
    <ligand>
        <name>Zn(2+)</name>
        <dbReference type="ChEBI" id="CHEBI:29105"/>
        <label>3</label>
    </ligand>
</feature>
<feature type="binding site" evidence="1">
    <location>
        <position position="243"/>
    </location>
    <ligand>
        <name>Zn(2+)</name>
        <dbReference type="ChEBI" id="CHEBI:29105"/>
        <label>3</label>
    </ligand>
</feature>
<feature type="binding site" evidence="1">
    <location>
        <position position="287"/>
    </location>
    <ligand>
        <name>Zn(2+)</name>
        <dbReference type="ChEBI" id="CHEBI:29105"/>
        <label>4</label>
    </ligand>
</feature>
<feature type="binding site" evidence="1">
    <location>
        <position position="290"/>
    </location>
    <ligand>
        <name>Zn(2+)</name>
        <dbReference type="ChEBI" id="CHEBI:29105"/>
        <label>4</label>
    </ligand>
</feature>
<feature type="binding site" evidence="1">
    <location>
        <position position="302"/>
    </location>
    <ligand>
        <name>Zn(2+)</name>
        <dbReference type="ChEBI" id="CHEBI:29105"/>
        <label>4</label>
    </ligand>
</feature>
<feature type="binding site" evidence="1">
    <location>
        <position position="306"/>
    </location>
    <ligand>
        <name>Zn(2+)</name>
        <dbReference type="ChEBI" id="CHEBI:29105"/>
        <label>4</label>
    </ligand>
</feature>
<feature type="sequence variant" id="VAR_031146" description="In dbSNP:rs2560306.">
    <original>R</original>
    <variation>H</variation>
    <location>
        <position position="173"/>
    </location>
</feature>
<name>ZN474_HUMAN</name>
<protein>
    <recommendedName>
        <fullName>Zinc finger protein 474</fullName>
    </recommendedName>
    <alternativeName>
        <fullName>Testis-specific zinc finger protein</fullName>
        <shortName>TSZFP</shortName>
    </alternativeName>
</protein>
<comment type="cofactor">
    <cofactor evidence="1">
        <name>Zn(2+)</name>
        <dbReference type="ChEBI" id="CHEBI:29105"/>
    </cofactor>
</comment>
<comment type="interaction">
    <interactant intactId="EBI-17269964">
        <id>Q6S9Z5</id>
    </interactant>
    <interactant intactId="EBI-11096309">
        <id>Q9NYB9-2</id>
        <label>ABI2</label>
    </interactant>
    <organismsDiffer>false</organismsDiffer>
    <experiments>3</experiments>
</comment>
<comment type="interaction">
    <interactant intactId="EBI-17269964">
        <id>Q6S9Z5</id>
    </interactant>
    <interactant intactId="EBI-3923949">
        <id>Q8N8Y2</id>
        <label>ATP6V0D2</label>
    </interactant>
    <organismsDiffer>false</organismsDiffer>
    <experiments>3</experiments>
</comment>
<comment type="interaction">
    <interactant intactId="EBI-17269964">
        <id>Q6S9Z5</id>
    </interactant>
    <interactant intactId="EBI-11524452">
        <id>Q8N9N5-2</id>
        <label>BANP</label>
    </interactant>
    <organismsDiffer>false</organismsDiffer>
    <experiments>3</experiments>
</comment>
<comment type="interaction">
    <interactant intactId="EBI-17269964">
        <id>Q6S9Z5</id>
    </interactant>
    <interactant intactId="EBI-739879">
        <id>Q53TS8</id>
        <label>C2CD6</label>
    </interactant>
    <organismsDiffer>false</organismsDiffer>
    <experiments>3</experiments>
</comment>
<comment type="interaction">
    <interactant intactId="EBI-17269964">
        <id>Q6S9Z5</id>
    </interactant>
    <interactant intactId="EBI-10311131">
        <id>Q9NP86</id>
        <label>CABP5</label>
    </interactant>
    <organismsDiffer>false</organismsDiffer>
    <experiments>3</experiments>
</comment>
<comment type="interaction">
    <interactant intactId="EBI-17269964">
        <id>Q6S9Z5</id>
    </interactant>
    <interactant intactId="EBI-10961624">
        <id>Q2TAC2-2</id>
        <label>CCDC57</label>
    </interactant>
    <organismsDiffer>false</organismsDiffer>
    <experiments>3</experiments>
</comment>
<comment type="interaction">
    <interactant intactId="EBI-17269964">
        <id>Q6S9Z5</id>
    </interactant>
    <interactant intactId="EBI-725694">
        <id>Q9NX08</id>
        <label>COMMD8</label>
    </interactant>
    <organismsDiffer>false</organismsDiffer>
    <experiments>3</experiments>
</comment>
<comment type="interaction">
    <interactant intactId="EBI-17269964">
        <id>Q6S9Z5</id>
    </interactant>
    <interactant intactId="EBI-12012272">
        <id>Q9UBL6-2</id>
        <label>CPNE7</label>
    </interactant>
    <organismsDiffer>false</organismsDiffer>
    <experiments>3</experiments>
</comment>
<comment type="interaction">
    <interactant intactId="EBI-17269964">
        <id>Q6S9Z5</id>
    </interactant>
    <interactant intactId="EBI-11962928">
        <id>Q9UI47-2</id>
        <label>CTNNA3</label>
    </interactant>
    <organismsDiffer>false</organismsDiffer>
    <experiments>3</experiments>
</comment>
<comment type="interaction">
    <interactant intactId="EBI-17269964">
        <id>Q6S9Z5</id>
    </interactant>
    <interactant intactId="EBI-5773072">
        <id>Q9BZ67</id>
        <label>FRMD8</label>
    </interactant>
    <organismsDiffer>false</organismsDiffer>
    <experiments>3</experiments>
</comment>
<comment type="interaction">
    <interactant intactId="EBI-17269964">
        <id>Q6S9Z5</id>
    </interactant>
    <interactant intactId="EBI-12178961">
        <id>Q8N954-2</id>
        <label>GPATCH11</label>
    </interactant>
    <organismsDiffer>false</organismsDiffer>
    <experiments>3</experiments>
</comment>
<comment type="interaction">
    <interactant intactId="EBI-17269964">
        <id>Q6S9Z5</id>
    </interactant>
    <interactant intactId="EBI-401755">
        <id>P62993</id>
        <label>GRB2</label>
    </interactant>
    <organismsDiffer>false</organismsDiffer>
    <experiments>3</experiments>
</comment>
<comment type="interaction">
    <interactant intactId="EBI-17269964">
        <id>Q6S9Z5</id>
    </interactant>
    <interactant intactId="EBI-740553">
        <id>P13807</id>
        <label>GYS1</label>
    </interactant>
    <organismsDiffer>false</organismsDiffer>
    <experiments>3</experiments>
</comment>
<comment type="interaction">
    <interactant intactId="EBI-17269964">
        <id>Q6S9Z5</id>
    </interactant>
    <interactant intactId="EBI-17178971">
        <id>Q14005-2</id>
        <label>IL16</label>
    </interactant>
    <organismsDiffer>false</organismsDiffer>
    <experiments>3</experiments>
</comment>
<comment type="interaction">
    <interactant intactId="EBI-17269964">
        <id>Q6S9Z5</id>
    </interactant>
    <interactant intactId="EBI-11954971">
        <id>Q96MP8-2</id>
        <label>KCTD7</label>
    </interactant>
    <organismsDiffer>false</organismsDiffer>
    <experiments>3</experiments>
</comment>
<comment type="interaction">
    <interactant intactId="EBI-17269964">
        <id>Q6S9Z5</id>
    </interactant>
    <interactant intactId="EBI-9384556">
        <id>Q9BTE3-2</id>
        <label>MCMBP</label>
    </interactant>
    <organismsDiffer>false</organismsDiffer>
    <experiments>3</experiments>
</comment>
<comment type="interaction">
    <interactant intactId="EBI-17269964">
        <id>Q6S9Z5</id>
    </interactant>
    <interactant intactId="EBI-744248">
        <id>P40692</id>
        <label>MLH1</label>
    </interactant>
    <organismsDiffer>false</organismsDiffer>
    <experiments>3</experiments>
</comment>
<comment type="interaction">
    <interactant intactId="EBI-17269964">
        <id>Q6S9Z5</id>
    </interactant>
    <interactant intactId="EBI-12025760">
        <id>Q86UR1-2</id>
        <label>NOXA1</label>
    </interactant>
    <organismsDiffer>false</organismsDiffer>
    <experiments>3</experiments>
</comment>
<comment type="interaction">
    <interactant intactId="EBI-17269964">
        <id>Q6S9Z5</id>
    </interactant>
    <interactant intactId="EBI-709807">
        <id>P16118</id>
        <label>PFKFB1</label>
    </interactant>
    <organismsDiffer>false</organismsDiffer>
    <experiments>3</experiments>
</comment>
<comment type="interaction">
    <interactant intactId="EBI-17269964">
        <id>Q6S9Z5</id>
    </interactant>
    <interactant intactId="EBI-368321">
        <id>O60437</id>
        <label>PPL</label>
    </interactant>
    <organismsDiffer>false</organismsDiffer>
    <experiments>3</experiments>
</comment>
<comment type="interaction">
    <interactant intactId="EBI-17269964">
        <id>Q6S9Z5</id>
    </interactant>
    <interactant intactId="EBI-1053424">
        <id>O43741</id>
        <label>PRKAB2</label>
    </interactant>
    <organismsDiffer>false</organismsDiffer>
    <experiments>3</experiments>
</comment>
<comment type="interaction">
    <interactant intactId="EBI-17269964">
        <id>Q6S9Z5</id>
    </interactant>
    <interactant intactId="EBI-748350">
        <id>Q9UHP6</id>
        <label>RSPH14</label>
    </interactant>
    <organismsDiffer>false</organismsDiffer>
    <experiments>3</experiments>
</comment>
<comment type="interaction">
    <interactant intactId="EBI-17269964">
        <id>Q6S9Z5</id>
    </interactant>
    <interactant intactId="EBI-714091">
        <id>P49903</id>
        <label>SEPHS1</label>
    </interactant>
    <organismsDiffer>false</organismsDiffer>
    <experiments>3</experiments>
</comment>
<comment type="interaction">
    <interactant intactId="EBI-17269964">
        <id>Q6S9Z5</id>
    </interactant>
    <interactant intactId="EBI-7413767">
        <id>Q9Y242</id>
        <label>TCF19</label>
    </interactant>
    <organismsDiffer>false</organismsDiffer>
    <experiments>3</experiments>
</comment>
<comment type="interaction">
    <interactant intactId="EBI-17269964">
        <id>Q6S9Z5</id>
    </interactant>
    <interactant intactId="EBI-750487">
        <id>Q8WW24</id>
        <label>TEKT4</label>
    </interactant>
    <organismsDiffer>false</organismsDiffer>
    <experiments>3</experiments>
</comment>
<comment type="interaction">
    <interactant intactId="EBI-17269964">
        <id>Q6S9Z5</id>
    </interactant>
    <interactant intactId="EBI-740098">
        <id>P36406</id>
        <label>TRIM23</label>
    </interactant>
    <organismsDiffer>false</organismsDiffer>
    <experiments>3</experiments>
</comment>
<comment type="interaction">
    <interactant intactId="EBI-17269964">
        <id>Q6S9Z5</id>
    </interactant>
    <interactant intactId="EBI-746981">
        <id>Q969E8</id>
        <label>TSR2</label>
    </interactant>
    <organismsDiffer>false</organismsDiffer>
    <experiments>3</experiments>
</comment>
<comment type="interaction">
    <interactant intactId="EBI-17269964">
        <id>Q6S9Z5</id>
    </interactant>
    <interactant intactId="EBI-7353612">
        <id>P57075-2</id>
        <label>UBASH3A</label>
    </interactant>
    <organismsDiffer>false</organismsDiffer>
    <experiments>3</experiments>
</comment>
<comment type="interaction">
    <interactant intactId="EBI-17269964">
        <id>Q6S9Z5</id>
    </interactant>
    <interactant intactId="EBI-11963196">
        <id>Q15915</id>
        <label>ZIC1</label>
    </interactant>
    <organismsDiffer>false</organismsDiffer>
    <experiments>3</experiments>
</comment>
<comment type="sequence caution" evidence="3">
    <conflict type="frameshift">
        <sequence resource="EMBL-CDS" id="BAB71507"/>
    </conflict>
</comment>
<dbReference type="EMBL" id="AY461732">
    <property type="protein sequence ID" value="AAS21253.1"/>
    <property type="molecule type" value="mRNA"/>
</dbReference>
<dbReference type="EMBL" id="AK057483">
    <property type="protein sequence ID" value="BAB71507.1"/>
    <property type="status" value="ALT_FRAME"/>
    <property type="molecule type" value="mRNA"/>
</dbReference>
<dbReference type="EMBL" id="AK290985">
    <property type="protein sequence ID" value="BAF83674.1"/>
    <property type="molecule type" value="mRNA"/>
</dbReference>
<dbReference type="EMBL" id="CH471086">
    <property type="protein sequence ID" value="EAW48893.1"/>
    <property type="molecule type" value="Genomic_DNA"/>
</dbReference>
<dbReference type="EMBL" id="BC133022">
    <property type="protein sequence ID" value="AAI33023.1"/>
    <property type="molecule type" value="mRNA"/>
</dbReference>
<dbReference type="EMBL" id="BC133026">
    <property type="protein sequence ID" value="AAI33027.1"/>
    <property type="molecule type" value="mRNA"/>
</dbReference>
<dbReference type="CCDS" id="CCDS4130.1"/>
<dbReference type="RefSeq" id="NP_997200.1">
    <property type="nucleotide sequence ID" value="NM_207317.3"/>
</dbReference>
<dbReference type="BioGRID" id="126377">
    <property type="interactions" value="44"/>
</dbReference>
<dbReference type="FunCoup" id="Q6S9Z5">
    <property type="interactions" value="8"/>
</dbReference>
<dbReference type="IntAct" id="Q6S9Z5">
    <property type="interactions" value="29"/>
</dbReference>
<dbReference type="STRING" id="9606.ENSP00000296600"/>
<dbReference type="iPTMnet" id="Q6S9Z5"/>
<dbReference type="PhosphoSitePlus" id="Q6S9Z5"/>
<dbReference type="BioMuta" id="ZNF474"/>
<dbReference type="DMDM" id="74758522"/>
<dbReference type="jPOST" id="Q6S9Z5"/>
<dbReference type="MassIVE" id="Q6S9Z5"/>
<dbReference type="PaxDb" id="9606-ENSP00000296600"/>
<dbReference type="PeptideAtlas" id="Q6S9Z5"/>
<dbReference type="ProteomicsDB" id="67352"/>
<dbReference type="Antibodypedia" id="25613">
    <property type="antibodies" value="39 antibodies from 11 providers"/>
</dbReference>
<dbReference type="DNASU" id="133923"/>
<dbReference type="Ensembl" id="ENST00000296600.5">
    <property type="protein sequence ID" value="ENSP00000296600.4"/>
    <property type="gene ID" value="ENSG00000164185.7"/>
</dbReference>
<dbReference type="GeneID" id="133923"/>
<dbReference type="KEGG" id="hsa:133923"/>
<dbReference type="MANE-Select" id="ENST00000296600.5">
    <property type="protein sequence ID" value="ENSP00000296600.4"/>
    <property type="RefSeq nucleotide sequence ID" value="NM_207317.3"/>
    <property type="RefSeq protein sequence ID" value="NP_997200.1"/>
</dbReference>
<dbReference type="UCSC" id="uc003ksv.4">
    <property type="organism name" value="human"/>
</dbReference>
<dbReference type="AGR" id="HGNC:23245"/>
<dbReference type="CTD" id="133923"/>
<dbReference type="DisGeNET" id="133923"/>
<dbReference type="GeneCards" id="ZNF474"/>
<dbReference type="HGNC" id="HGNC:23245">
    <property type="gene designation" value="ZNF474"/>
</dbReference>
<dbReference type="HPA" id="ENSG00000164185">
    <property type="expression patterns" value="Group enriched (choroid plexus, fallopian tube, testis)"/>
</dbReference>
<dbReference type="neXtProt" id="NX_Q6S9Z5"/>
<dbReference type="OpenTargets" id="ENSG00000164185"/>
<dbReference type="PharmGKB" id="PA144596519"/>
<dbReference type="VEuPathDB" id="HostDB:ENSG00000164185"/>
<dbReference type="eggNOG" id="ENOG502QWEF">
    <property type="taxonomic scope" value="Eukaryota"/>
</dbReference>
<dbReference type="GeneTree" id="ENSGT00940000164652"/>
<dbReference type="HOGENOM" id="CLU_882643_0_0_1"/>
<dbReference type="InParanoid" id="Q6S9Z5"/>
<dbReference type="OMA" id="RSCKTQP"/>
<dbReference type="OrthoDB" id="265955at2759"/>
<dbReference type="PAN-GO" id="Q6S9Z5">
    <property type="GO annotations" value="0 GO annotations based on evolutionary models"/>
</dbReference>
<dbReference type="PhylomeDB" id="Q6S9Z5"/>
<dbReference type="TreeFam" id="TF328720"/>
<dbReference type="PathwayCommons" id="Q6S9Z5"/>
<dbReference type="SignaLink" id="Q6S9Z5"/>
<dbReference type="BioGRID-ORCS" id="133923">
    <property type="hits" value="13 hits in 1146 CRISPR screens"/>
</dbReference>
<dbReference type="ChiTaRS" id="ZNF474">
    <property type="organism name" value="human"/>
</dbReference>
<dbReference type="GenomeRNAi" id="133923"/>
<dbReference type="Pharos" id="Q6S9Z5">
    <property type="development level" value="Tdark"/>
</dbReference>
<dbReference type="PRO" id="PR:Q6S9Z5"/>
<dbReference type="Proteomes" id="UP000005640">
    <property type="component" value="Chromosome 5"/>
</dbReference>
<dbReference type="RNAct" id="Q6S9Z5">
    <property type="molecule type" value="protein"/>
</dbReference>
<dbReference type="Bgee" id="ENSG00000164185">
    <property type="expression patterns" value="Expressed in male germ line stem cell (sensu Vertebrata) in testis and 96 other cell types or tissues"/>
</dbReference>
<dbReference type="ExpressionAtlas" id="Q6S9Z5">
    <property type="expression patterns" value="baseline and differential"/>
</dbReference>
<dbReference type="GO" id="GO:0008270">
    <property type="term" value="F:zinc ion binding"/>
    <property type="evidence" value="ECO:0007669"/>
    <property type="project" value="UniProtKB-KW"/>
</dbReference>
<dbReference type="Gene3D" id="3.30.160.60">
    <property type="entry name" value="Classic Zinc Finger"/>
    <property type="match status" value="4"/>
</dbReference>
<dbReference type="InterPro" id="IPR026319">
    <property type="entry name" value="ZC2HC1A/B-like"/>
</dbReference>
<dbReference type="InterPro" id="IPR013087">
    <property type="entry name" value="Znf_C2H2_type"/>
</dbReference>
<dbReference type="InterPro" id="IPR049899">
    <property type="entry name" value="Znf_C2HC_C3H"/>
</dbReference>
<dbReference type="PANTHER" id="PTHR13555">
    <property type="entry name" value="C2H2 ZINC FINGER CGI-62-RELATED"/>
    <property type="match status" value="1"/>
</dbReference>
<dbReference type="PANTHER" id="PTHR13555:SF68">
    <property type="entry name" value="ZINC FINGER PROTEIN 474"/>
    <property type="match status" value="1"/>
</dbReference>
<dbReference type="Pfam" id="PF13913">
    <property type="entry name" value="zf-C2HC_2"/>
    <property type="match status" value="4"/>
</dbReference>
<dbReference type="PROSITE" id="PS52027">
    <property type="entry name" value="ZF_C2HC_C3H"/>
    <property type="match status" value="4"/>
</dbReference>
<dbReference type="PROSITE" id="PS50157">
    <property type="entry name" value="ZINC_FINGER_C2H2_2"/>
    <property type="match status" value="1"/>
</dbReference>
<proteinExistence type="evidence at protein level"/>
<gene>
    <name type="primary">ZNF474</name>
</gene>